<feature type="chain" id="PRO_1000007824" description="4-diphosphocytidyl-2-C-methyl-D-erythritol kinase">
    <location>
        <begin position="1"/>
        <end position="293"/>
    </location>
</feature>
<feature type="active site" evidence="1">
    <location>
        <position position="16"/>
    </location>
</feature>
<feature type="active site" evidence="1">
    <location>
        <position position="141"/>
    </location>
</feature>
<feature type="binding site" evidence="1">
    <location>
        <begin position="99"/>
        <end position="109"/>
    </location>
    <ligand>
        <name>ATP</name>
        <dbReference type="ChEBI" id="CHEBI:30616"/>
    </ligand>
</feature>
<comment type="function">
    <text evidence="1">Catalyzes the phosphorylation of the position 2 hydroxy group of 4-diphosphocytidyl-2C-methyl-D-erythritol.</text>
</comment>
<comment type="catalytic activity">
    <reaction evidence="1">
        <text>4-CDP-2-C-methyl-D-erythritol + ATP = 4-CDP-2-C-methyl-D-erythritol 2-phosphate + ADP + H(+)</text>
        <dbReference type="Rhea" id="RHEA:18437"/>
        <dbReference type="ChEBI" id="CHEBI:15378"/>
        <dbReference type="ChEBI" id="CHEBI:30616"/>
        <dbReference type="ChEBI" id="CHEBI:57823"/>
        <dbReference type="ChEBI" id="CHEBI:57919"/>
        <dbReference type="ChEBI" id="CHEBI:456216"/>
        <dbReference type="EC" id="2.7.1.148"/>
    </reaction>
</comment>
<comment type="pathway">
    <text evidence="1">Isoprenoid biosynthesis; isopentenyl diphosphate biosynthesis via DXP pathway; isopentenyl diphosphate from 1-deoxy-D-xylulose 5-phosphate: step 3/6.</text>
</comment>
<comment type="similarity">
    <text evidence="1">Belongs to the GHMP kinase family. IspE subfamily.</text>
</comment>
<organism>
    <name type="scientific">Burkholderia pseudomallei (strain 668)</name>
    <dbReference type="NCBI Taxonomy" id="320373"/>
    <lineage>
        <taxon>Bacteria</taxon>
        <taxon>Pseudomonadati</taxon>
        <taxon>Pseudomonadota</taxon>
        <taxon>Betaproteobacteria</taxon>
        <taxon>Burkholderiales</taxon>
        <taxon>Burkholderiaceae</taxon>
        <taxon>Burkholderia</taxon>
        <taxon>pseudomallei group</taxon>
    </lineage>
</organism>
<keyword id="KW-0067">ATP-binding</keyword>
<keyword id="KW-0414">Isoprene biosynthesis</keyword>
<keyword id="KW-0418">Kinase</keyword>
<keyword id="KW-0547">Nucleotide-binding</keyword>
<keyword id="KW-0808">Transferase</keyword>
<reference key="1">
    <citation type="journal article" date="2010" name="Genome Biol. Evol.">
        <title>Continuing evolution of Burkholderia mallei through genome reduction and large-scale rearrangements.</title>
        <authorList>
            <person name="Losada L."/>
            <person name="Ronning C.M."/>
            <person name="DeShazer D."/>
            <person name="Woods D."/>
            <person name="Fedorova N."/>
            <person name="Kim H.S."/>
            <person name="Shabalina S.A."/>
            <person name="Pearson T.R."/>
            <person name="Brinkac L."/>
            <person name="Tan P."/>
            <person name="Nandi T."/>
            <person name="Crabtree J."/>
            <person name="Badger J."/>
            <person name="Beckstrom-Sternberg S."/>
            <person name="Saqib M."/>
            <person name="Schutzer S.E."/>
            <person name="Keim P."/>
            <person name="Nierman W.C."/>
        </authorList>
    </citation>
    <scope>NUCLEOTIDE SEQUENCE [LARGE SCALE GENOMIC DNA]</scope>
    <source>
        <strain>668</strain>
    </source>
</reference>
<evidence type="ECO:0000255" key="1">
    <source>
        <dbReference type="HAMAP-Rule" id="MF_00061"/>
    </source>
</evidence>
<sequence length="293" mass="31582">MTDTTRSLRDCLAPAKLNLFLHITGRRPDGYHALQSVFQLLDWGDRLHFTLRDDGKVSRVTDVPGVPEESDLVVRAASLLKAHAGATLGVDIEIDKRLPMGAGLGGGSSDAATTLLALNRLWRLDLPRTTLQSLAVKLGADVPFFVFGKNAFAEGIGEALQAVELPARWFLVVTPRVHVPTAAIFSEKSLTRDSKPITITDFLAQCGIDAGWPDSFGRNDMQPVVTSKYAEVAKVVEWFYNLTPARMTGSGASVFAAFKSKADAEAAQAKLPAGWNSAVAESMSEHPLFAFAS</sequence>
<proteinExistence type="inferred from homology"/>
<protein>
    <recommendedName>
        <fullName evidence="1">4-diphosphocytidyl-2-C-methyl-D-erythritol kinase</fullName>
        <shortName evidence="1">CMK</shortName>
        <ecNumber evidence="1">2.7.1.148</ecNumber>
    </recommendedName>
    <alternativeName>
        <fullName evidence="1">4-(cytidine-5'-diphospho)-2-C-methyl-D-erythritol kinase</fullName>
    </alternativeName>
</protein>
<name>ISPE_BURP6</name>
<gene>
    <name evidence="1" type="primary">ispE</name>
    <name type="ordered locus">BURPS668_0571</name>
</gene>
<dbReference type="EC" id="2.7.1.148" evidence="1"/>
<dbReference type="EMBL" id="CP000570">
    <property type="protein sequence ID" value="ABN85102.1"/>
    <property type="molecule type" value="Genomic_DNA"/>
</dbReference>
<dbReference type="RefSeq" id="WP_011851050.1">
    <property type="nucleotide sequence ID" value="NC_009074.1"/>
</dbReference>
<dbReference type="SMR" id="A3N5K2"/>
<dbReference type="KEGG" id="bpd:BURPS668_0571"/>
<dbReference type="HOGENOM" id="CLU_053057_3_0_4"/>
<dbReference type="UniPathway" id="UPA00056">
    <property type="reaction ID" value="UER00094"/>
</dbReference>
<dbReference type="GO" id="GO:0050515">
    <property type="term" value="F:4-(cytidine 5'-diphospho)-2-C-methyl-D-erythritol kinase activity"/>
    <property type="evidence" value="ECO:0007669"/>
    <property type="project" value="UniProtKB-UniRule"/>
</dbReference>
<dbReference type="GO" id="GO:0005524">
    <property type="term" value="F:ATP binding"/>
    <property type="evidence" value="ECO:0007669"/>
    <property type="project" value="UniProtKB-UniRule"/>
</dbReference>
<dbReference type="GO" id="GO:0019288">
    <property type="term" value="P:isopentenyl diphosphate biosynthetic process, methylerythritol 4-phosphate pathway"/>
    <property type="evidence" value="ECO:0007669"/>
    <property type="project" value="UniProtKB-UniRule"/>
</dbReference>
<dbReference type="GO" id="GO:0016114">
    <property type="term" value="P:terpenoid biosynthetic process"/>
    <property type="evidence" value="ECO:0007669"/>
    <property type="project" value="InterPro"/>
</dbReference>
<dbReference type="Gene3D" id="3.30.230.10">
    <property type="match status" value="1"/>
</dbReference>
<dbReference type="Gene3D" id="3.30.70.890">
    <property type="entry name" value="GHMP kinase, C-terminal domain"/>
    <property type="match status" value="1"/>
</dbReference>
<dbReference type="HAMAP" id="MF_00061">
    <property type="entry name" value="IspE"/>
    <property type="match status" value="1"/>
</dbReference>
<dbReference type="InterPro" id="IPR013750">
    <property type="entry name" value="GHMP_kinase_C_dom"/>
</dbReference>
<dbReference type="InterPro" id="IPR036554">
    <property type="entry name" value="GHMP_kinase_C_sf"/>
</dbReference>
<dbReference type="InterPro" id="IPR006204">
    <property type="entry name" value="GHMP_kinase_N_dom"/>
</dbReference>
<dbReference type="InterPro" id="IPR004424">
    <property type="entry name" value="IspE"/>
</dbReference>
<dbReference type="InterPro" id="IPR020568">
    <property type="entry name" value="Ribosomal_Su5_D2-typ_SF"/>
</dbReference>
<dbReference type="InterPro" id="IPR014721">
    <property type="entry name" value="Ribsml_uS5_D2-typ_fold_subgr"/>
</dbReference>
<dbReference type="NCBIfam" id="TIGR00154">
    <property type="entry name" value="ispE"/>
    <property type="match status" value="1"/>
</dbReference>
<dbReference type="NCBIfam" id="NF011202">
    <property type="entry name" value="PRK14608.1"/>
    <property type="match status" value="1"/>
</dbReference>
<dbReference type="PANTHER" id="PTHR43527">
    <property type="entry name" value="4-DIPHOSPHOCYTIDYL-2-C-METHYL-D-ERYTHRITOL KINASE, CHLOROPLASTIC"/>
    <property type="match status" value="1"/>
</dbReference>
<dbReference type="PANTHER" id="PTHR43527:SF2">
    <property type="entry name" value="4-DIPHOSPHOCYTIDYL-2-C-METHYL-D-ERYTHRITOL KINASE, CHLOROPLASTIC"/>
    <property type="match status" value="1"/>
</dbReference>
<dbReference type="Pfam" id="PF08544">
    <property type="entry name" value="GHMP_kinases_C"/>
    <property type="match status" value="1"/>
</dbReference>
<dbReference type="Pfam" id="PF00288">
    <property type="entry name" value="GHMP_kinases_N"/>
    <property type="match status" value="1"/>
</dbReference>
<dbReference type="PIRSF" id="PIRSF010376">
    <property type="entry name" value="IspE"/>
    <property type="match status" value="1"/>
</dbReference>
<dbReference type="SUPFAM" id="SSF55060">
    <property type="entry name" value="GHMP Kinase, C-terminal domain"/>
    <property type="match status" value="1"/>
</dbReference>
<dbReference type="SUPFAM" id="SSF54211">
    <property type="entry name" value="Ribosomal protein S5 domain 2-like"/>
    <property type="match status" value="1"/>
</dbReference>
<accession>A3N5K2</accession>